<protein>
    <recommendedName>
        <fullName>Cytochrome b</fullName>
    </recommendedName>
    <alternativeName>
        <fullName>Complex III subunit 3</fullName>
    </alternativeName>
    <alternativeName>
        <fullName>Complex III subunit III</fullName>
    </alternativeName>
    <alternativeName>
        <fullName>Cytochrome b-c1 complex subunit 3</fullName>
    </alternativeName>
    <alternativeName>
        <fullName>Ubiquinol-cytochrome-c reductase complex cytochrome b subunit</fullName>
    </alternativeName>
</protein>
<geneLocation type="mitochondrion"/>
<accession>Q1PG50</accession>
<sequence length="379" mass="42878">MTNIRKTHPLFKIINDSLIDLPAPSSISSWWNFGSLLGICLIIQILTGLFLAMHYTSDTTTAFQSVTHICRDVNYGWILRYLHANGASMFFICLFLHVGRGLYYGSYTYKETWNMGIVLLFAVMATAFMGYVLPWGQMSFWGATVITNLLSAIPYIGTDLVEWIWGGFSVDKATLTRFFAFHFLLPFIISALVMVHLLFLHETGSNNPTGIPSDMDMIPFHPYYTIKDMLGALAMILILLTLVLFSPDLLGDPDNYIPANPLNTPPHIKPEWYFLFAYAILRSIPNKLGGVLALVLSILILALMPLLHTSKQRSMMFRPLSQCMFWLLVADLLTLTWIGGQPVEHPYIIIGQLASILYFLLILVLMPLVSIAENHFLKW</sequence>
<feature type="chain" id="PRO_0000254837" description="Cytochrome b">
    <location>
        <begin position="1"/>
        <end position="379"/>
    </location>
</feature>
<feature type="transmembrane region" description="Helical" evidence="2">
    <location>
        <begin position="33"/>
        <end position="53"/>
    </location>
</feature>
<feature type="transmembrane region" description="Helical" evidence="2">
    <location>
        <begin position="77"/>
        <end position="98"/>
    </location>
</feature>
<feature type="transmembrane region" description="Helical" evidence="2">
    <location>
        <begin position="113"/>
        <end position="133"/>
    </location>
</feature>
<feature type="transmembrane region" description="Helical" evidence="2">
    <location>
        <begin position="178"/>
        <end position="198"/>
    </location>
</feature>
<feature type="transmembrane region" description="Helical" evidence="2">
    <location>
        <begin position="226"/>
        <end position="246"/>
    </location>
</feature>
<feature type="transmembrane region" description="Helical" evidence="2">
    <location>
        <begin position="288"/>
        <end position="308"/>
    </location>
</feature>
<feature type="transmembrane region" description="Helical" evidence="2">
    <location>
        <begin position="320"/>
        <end position="340"/>
    </location>
</feature>
<feature type="transmembrane region" description="Helical" evidence="2">
    <location>
        <begin position="347"/>
        <end position="367"/>
    </location>
</feature>
<feature type="binding site" description="axial binding residue" evidence="2">
    <location>
        <position position="83"/>
    </location>
    <ligand>
        <name>heme b</name>
        <dbReference type="ChEBI" id="CHEBI:60344"/>
        <label>b562</label>
    </ligand>
    <ligandPart>
        <name>Fe</name>
        <dbReference type="ChEBI" id="CHEBI:18248"/>
    </ligandPart>
</feature>
<feature type="binding site" description="axial binding residue" evidence="2">
    <location>
        <position position="97"/>
    </location>
    <ligand>
        <name>heme b</name>
        <dbReference type="ChEBI" id="CHEBI:60344"/>
        <label>b566</label>
    </ligand>
    <ligandPart>
        <name>Fe</name>
        <dbReference type="ChEBI" id="CHEBI:18248"/>
    </ligandPart>
</feature>
<feature type="binding site" description="axial binding residue" evidence="2">
    <location>
        <position position="182"/>
    </location>
    <ligand>
        <name>heme b</name>
        <dbReference type="ChEBI" id="CHEBI:60344"/>
        <label>b562</label>
    </ligand>
    <ligandPart>
        <name>Fe</name>
        <dbReference type="ChEBI" id="CHEBI:18248"/>
    </ligandPart>
</feature>
<feature type="binding site" description="axial binding residue" evidence="2">
    <location>
        <position position="196"/>
    </location>
    <ligand>
        <name>heme b</name>
        <dbReference type="ChEBI" id="CHEBI:60344"/>
        <label>b566</label>
    </ligand>
    <ligandPart>
        <name>Fe</name>
        <dbReference type="ChEBI" id="CHEBI:18248"/>
    </ligandPart>
</feature>
<feature type="binding site" evidence="2">
    <location>
        <position position="201"/>
    </location>
    <ligand>
        <name>a ubiquinone</name>
        <dbReference type="ChEBI" id="CHEBI:16389"/>
    </ligand>
</feature>
<keyword id="KW-0249">Electron transport</keyword>
<keyword id="KW-0349">Heme</keyword>
<keyword id="KW-0408">Iron</keyword>
<keyword id="KW-0472">Membrane</keyword>
<keyword id="KW-0479">Metal-binding</keyword>
<keyword id="KW-0496">Mitochondrion</keyword>
<keyword id="KW-0999">Mitochondrion inner membrane</keyword>
<keyword id="KW-0679">Respiratory chain</keyword>
<keyword id="KW-0812">Transmembrane</keyword>
<keyword id="KW-1133">Transmembrane helix</keyword>
<keyword id="KW-0813">Transport</keyword>
<keyword id="KW-0830">Ubiquinone</keyword>
<dbReference type="EMBL" id="DQ445711">
    <property type="protein sequence ID" value="ABE02431.1"/>
    <property type="molecule type" value="Genomic_DNA"/>
</dbReference>
<dbReference type="SMR" id="Q1PG50"/>
<dbReference type="GO" id="GO:0005743">
    <property type="term" value="C:mitochondrial inner membrane"/>
    <property type="evidence" value="ECO:0007669"/>
    <property type="project" value="UniProtKB-SubCell"/>
</dbReference>
<dbReference type="GO" id="GO:0045275">
    <property type="term" value="C:respiratory chain complex III"/>
    <property type="evidence" value="ECO:0007669"/>
    <property type="project" value="InterPro"/>
</dbReference>
<dbReference type="GO" id="GO:0046872">
    <property type="term" value="F:metal ion binding"/>
    <property type="evidence" value="ECO:0007669"/>
    <property type="project" value="UniProtKB-KW"/>
</dbReference>
<dbReference type="GO" id="GO:0008121">
    <property type="term" value="F:ubiquinol-cytochrome-c reductase activity"/>
    <property type="evidence" value="ECO:0007669"/>
    <property type="project" value="InterPro"/>
</dbReference>
<dbReference type="GO" id="GO:0006122">
    <property type="term" value="P:mitochondrial electron transport, ubiquinol to cytochrome c"/>
    <property type="evidence" value="ECO:0007669"/>
    <property type="project" value="TreeGrafter"/>
</dbReference>
<dbReference type="CDD" id="cd00290">
    <property type="entry name" value="cytochrome_b_C"/>
    <property type="match status" value="1"/>
</dbReference>
<dbReference type="CDD" id="cd00284">
    <property type="entry name" value="Cytochrome_b_N"/>
    <property type="match status" value="1"/>
</dbReference>
<dbReference type="FunFam" id="1.20.810.10:FF:000002">
    <property type="entry name" value="Cytochrome b"/>
    <property type="match status" value="1"/>
</dbReference>
<dbReference type="Gene3D" id="1.20.810.10">
    <property type="entry name" value="Cytochrome Bc1 Complex, Chain C"/>
    <property type="match status" value="1"/>
</dbReference>
<dbReference type="InterPro" id="IPR005798">
    <property type="entry name" value="Cyt_b/b6_C"/>
</dbReference>
<dbReference type="InterPro" id="IPR036150">
    <property type="entry name" value="Cyt_b/b6_C_sf"/>
</dbReference>
<dbReference type="InterPro" id="IPR005797">
    <property type="entry name" value="Cyt_b/b6_N"/>
</dbReference>
<dbReference type="InterPro" id="IPR027387">
    <property type="entry name" value="Cytb/b6-like_sf"/>
</dbReference>
<dbReference type="InterPro" id="IPR030689">
    <property type="entry name" value="Cytochrome_b"/>
</dbReference>
<dbReference type="InterPro" id="IPR048260">
    <property type="entry name" value="Cytochrome_b_C_euk/bac"/>
</dbReference>
<dbReference type="InterPro" id="IPR048259">
    <property type="entry name" value="Cytochrome_b_N_euk/bac"/>
</dbReference>
<dbReference type="InterPro" id="IPR016174">
    <property type="entry name" value="Di-haem_cyt_TM"/>
</dbReference>
<dbReference type="PANTHER" id="PTHR19271">
    <property type="entry name" value="CYTOCHROME B"/>
    <property type="match status" value="1"/>
</dbReference>
<dbReference type="PANTHER" id="PTHR19271:SF16">
    <property type="entry name" value="CYTOCHROME B"/>
    <property type="match status" value="1"/>
</dbReference>
<dbReference type="Pfam" id="PF00032">
    <property type="entry name" value="Cytochrom_B_C"/>
    <property type="match status" value="1"/>
</dbReference>
<dbReference type="Pfam" id="PF00033">
    <property type="entry name" value="Cytochrome_B"/>
    <property type="match status" value="1"/>
</dbReference>
<dbReference type="PIRSF" id="PIRSF038885">
    <property type="entry name" value="COB"/>
    <property type="match status" value="1"/>
</dbReference>
<dbReference type="SUPFAM" id="SSF81648">
    <property type="entry name" value="a domain/subunit of cytochrome bc1 complex (Ubiquinol-cytochrome c reductase)"/>
    <property type="match status" value="1"/>
</dbReference>
<dbReference type="SUPFAM" id="SSF81342">
    <property type="entry name" value="Transmembrane di-heme cytochromes"/>
    <property type="match status" value="1"/>
</dbReference>
<dbReference type="PROSITE" id="PS51003">
    <property type="entry name" value="CYTB_CTER"/>
    <property type="match status" value="1"/>
</dbReference>
<dbReference type="PROSITE" id="PS51002">
    <property type="entry name" value="CYTB_NTER"/>
    <property type="match status" value="1"/>
</dbReference>
<gene>
    <name type="primary">MT-CYB</name>
    <name type="synonym">COB</name>
    <name type="synonym">CYTB</name>
    <name type="synonym">MTCYB</name>
</gene>
<name>CYB_NYCVZ</name>
<evidence type="ECO:0000250" key="1"/>
<evidence type="ECO:0000250" key="2">
    <source>
        <dbReference type="UniProtKB" id="P00157"/>
    </source>
</evidence>
<evidence type="ECO:0000255" key="3">
    <source>
        <dbReference type="PROSITE-ProRule" id="PRU00967"/>
    </source>
</evidence>
<evidence type="ECO:0000255" key="4">
    <source>
        <dbReference type="PROSITE-ProRule" id="PRU00968"/>
    </source>
</evidence>
<reference key="1">
    <citation type="submission" date="2006-03" db="EMBL/GenBank/DDBJ databases">
        <title>Phylogenetic relationships of the enigmatic harpy fruit bat, Harpyionycteris (Mammalia: Chiroptera: Pteropodidae).</title>
        <authorList>
            <person name="Giannini N.P."/>
            <person name="Almeida F.C."/>
            <person name="DeSalle R."/>
            <person name="Simmons N.B."/>
        </authorList>
    </citation>
    <scope>NUCLEOTIDE SEQUENCE [GENOMIC DNA]</scope>
    <source>
        <strain>Isolate 14</strain>
    </source>
</reference>
<organism>
    <name type="scientific">Nyctimene vizcaccia</name>
    <name type="common">Umboi tube-nosed fruit bat</name>
    <dbReference type="NCBI Taxonomy" id="170211"/>
    <lineage>
        <taxon>Eukaryota</taxon>
        <taxon>Metazoa</taxon>
        <taxon>Chordata</taxon>
        <taxon>Craniata</taxon>
        <taxon>Vertebrata</taxon>
        <taxon>Euteleostomi</taxon>
        <taxon>Mammalia</taxon>
        <taxon>Eutheria</taxon>
        <taxon>Laurasiatheria</taxon>
        <taxon>Chiroptera</taxon>
        <taxon>Yinpterochiroptera</taxon>
        <taxon>Pteropodoidea</taxon>
        <taxon>Pteropodidae</taxon>
        <taxon>Nyctimeninae</taxon>
        <taxon>Nyctimene</taxon>
    </lineage>
</organism>
<proteinExistence type="inferred from homology"/>
<comment type="function">
    <text evidence="2">Component of the ubiquinol-cytochrome c reductase complex (complex III or cytochrome b-c1 complex) that is part of the mitochondrial respiratory chain. The b-c1 complex mediates electron transfer from ubiquinol to cytochrome c. Contributes to the generation of a proton gradient across the mitochondrial membrane that is then used for ATP synthesis.</text>
</comment>
<comment type="cofactor">
    <cofactor evidence="2">
        <name>heme b</name>
        <dbReference type="ChEBI" id="CHEBI:60344"/>
    </cofactor>
    <text evidence="2">Binds 2 heme b groups non-covalently.</text>
</comment>
<comment type="subunit">
    <text evidence="2">The cytochrome bc1 complex contains 11 subunits: 3 respiratory subunits (MT-CYB, CYC1 and UQCRFS1), 2 core proteins (UQCRC1 and UQCRC2) and 6 low-molecular weight proteins (UQCRH/QCR6, UQCRB/QCR7, UQCRQ/QCR8, UQCR10/QCR9, UQCR11/QCR10 and a cleavage product of UQCRFS1). This cytochrome bc1 complex then forms a dimer.</text>
</comment>
<comment type="subcellular location">
    <subcellularLocation>
        <location evidence="2">Mitochondrion inner membrane</location>
        <topology evidence="2">Multi-pass membrane protein</topology>
    </subcellularLocation>
</comment>
<comment type="miscellaneous">
    <text evidence="1">Heme 1 (or BL or b562) is low-potential and absorbs at about 562 nm, and heme 2 (or BH or b566) is high-potential and absorbs at about 566 nm.</text>
</comment>
<comment type="similarity">
    <text evidence="3 4">Belongs to the cytochrome b family.</text>
</comment>
<comment type="caution">
    <text evidence="2">The full-length protein contains only eight transmembrane helices, not nine as predicted by bioinformatics tools.</text>
</comment>